<evidence type="ECO:0000255" key="1">
    <source>
        <dbReference type="HAMAP-Rule" id="MF_01152"/>
    </source>
</evidence>
<protein>
    <recommendedName>
        <fullName evidence="1">Chaperone protein DnaJ</fullName>
    </recommendedName>
</protein>
<proteinExistence type="inferred from homology"/>
<organism>
    <name type="scientific">Brucella suis biovar 1 (strain 1330)</name>
    <dbReference type="NCBI Taxonomy" id="204722"/>
    <lineage>
        <taxon>Bacteria</taxon>
        <taxon>Pseudomonadati</taxon>
        <taxon>Pseudomonadota</taxon>
        <taxon>Alphaproteobacteria</taxon>
        <taxon>Hyphomicrobiales</taxon>
        <taxon>Brucellaceae</taxon>
        <taxon>Brucella/Ochrobactrum group</taxon>
        <taxon>Brucella</taxon>
    </lineage>
</organism>
<reference key="1">
    <citation type="journal article" date="2002" name="Proc. Natl. Acad. Sci. U.S.A.">
        <title>The Brucella suis genome reveals fundamental similarities between animal and plant pathogens and symbionts.</title>
        <authorList>
            <person name="Paulsen I.T."/>
            <person name="Seshadri R."/>
            <person name="Nelson K.E."/>
            <person name="Eisen J.A."/>
            <person name="Heidelberg J.F."/>
            <person name="Read T.D."/>
            <person name="Dodson R.J."/>
            <person name="Umayam L.A."/>
            <person name="Brinkac L.M."/>
            <person name="Beanan M.J."/>
            <person name="Daugherty S.C."/>
            <person name="DeBoy R.T."/>
            <person name="Durkin A.S."/>
            <person name="Kolonay J.F."/>
            <person name="Madupu R."/>
            <person name="Nelson W.C."/>
            <person name="Ayodeji B."/>
            <person name="Kraul M."/>
            <person name="Shetty J."/>
            <person name="Malek J.A."/>
            <person name="Van Aken S.E."/>
            <person name="Riedmuller S."/>
            <person name="Tettelin H."/>
            <person name="Gill S.R."/>
            <person name="White O."/>
            <person name="Salzberg S.L."/>
            <person name="Hoover D.L."/>
            <person name="Lindler L.E."/>
            <person name="Halling S.M."/>
            <person name="Boyle S.M."/>
            <person name="Fraser C.M."/>
        </authorList>
    </citation>
    <scope>NUCLEOTIDE SEQUENCE [LARGE SCALE GENOMIC DNA]</scope>
    <source>
        <strain>1330</strain>
    </source>
</reference>
<reference key="2">
    <citation type="journal article" date="2011" name="J. Bacteriol.">
        <title>Revised genome sequence of Brucella suis 1330.</title>
        <authorList>
            <person name="Tae H."/>
            <person name="Shallom S."/>
            <person name="Settlage R."/>
            <person name="Preston D."/>
            <person name="Adams L.G."/>
            <person name="Garner H.R."/>
        </authorList>
    </citation>
    <scope>NUCLEOTIDE SEQUENCE [LARGE SCALE GENOMIC DNA]</scope>
    <source>
        <strain>1330</strain>
    </source>
</reference>
<feature type="chain" id="PRO_0000070744" description="Chaperone protein DnaJ">
    <location>
        <begin position="1"/>
        <end position="377"/>
    </location>
</feature>
<feature type="domain" description="J" evidence="1">
    <location>
        <begin position="4"/>
        <end position="69"/>
    </location>
</feature>
<feature type="repeat" description="CXXCXGXG motif">
    <location>
        <begin position="148"/>
        <end position="155"/>
    </location>
</feature>
<feature type="repeat" description="CXXCXGXG motif">
    <location>
        <begin position="165"/>
        <end position="172"/>
    </location>
</feature>
<feature type="repeat" description="CXXCXGXG motif">
    <location>
        <begin position="187"/>
        <end position="194"/>
    </location>
</feature>
<feature type="repeat" description="CXXCXGXG motif">
    <location>
        <begin position="201"/>
        <end position="208"/>
    </location>
</feature>
<feature type="zinc finger region" description="CR-type" evidence="1">
    <location>
        <begin position="135"/>
        <end position="213"/>
    </location>
</feature>
<feature type="binding site" evidence="1">
    <location>
        <position position="148"/>
    </location>
    <ligand>
        <name>Zn(2+)</name>
        <dbReference type="ChEBI" id="CHEBI:29105"/>
        <label>1</label>
    </ligand>
</feature>
<feature type="binding site" evidence="1">
    <location>
        <position position="151"/>
    </location>
    <ligand>
        <name>Zn(2+)</name>
        <dbReference type="ChEBI" id="CHEBI:29105"/>
        <label>1</label>
    </ligand>
</feature>
<feature type="binding site" evidence="1">
    <location>
        <position position="165"/>
    </location>
    <ligand>
        <name>Zn(2+)</name>
        <dbReference type="ChEBI" id="CHEBI:29105"/>
        <label>2</label>
    </ligand>
</feature>
<feature type="binding site" evidence="1">
    <location>
        <position position="168"/>
    </location>
    <ligand>
        <name>Zn(2+)</name>
        <dbReference type="ChEBI" id="CHEBI:29105"/>
        <label>2</label>
    </ligand>
</feature>
<feature type="binding site" evidence="1">
    <location>
        <position position="187"/>
    </location>
    <ligand>
        <name>Zn(2+)</name>
        <dbReference type="ChEBI" id="CHEBI:29105"/>
        <label>2</label>
    </ligand>
</feature>
<feature type="binding site" evidence="1">
    <location>
        <position position="190"/>
    </location>
    <ligand>
        <name>Zn(2+)</name>
        <dbReference type="ChEBI" id="CHEBI:29105"/>
        <label>2</label>
    </ligand>
</feature>
<feature type="binding site" evidence="1">
    <location>
        <position position="201"/>
    </location>
    <ligand>
        <name>Zn(2+)</name>
        <dbReference type="ChEBI" id="CHEBI:29105"/>
        <label>1</label>
    </ligand>
</feature>
<feature type="binding site" evidence="1">
    <location>
        <position position="204"/>
    </location>
    <ligand>
        <name>Zn(2+)</name>
        <dbReference type="ChEBI" id="CHEBI:29105"/>
        <label>1</label>
    </ligand>
</feature>
<dbReference type="EMBL" id="AE014291">
    <property type="protein sequence ID" value="AAN31016.1"/>
    <property type="molecule type" value="Genomic_DNA"/>
</dbReference>
<dbReference type="EMBL" id="CP002997">
    <property type="protein sequence ID" value="AEM19433.1"/>
    <property type="molecule type" value="Genomic_DNA"/>
</dbReference>
<dbReference type="PIR" id="AC3502">
    <property type="entry name" value="AC3502"/>
</dbReference>
<dbReference type="RefSeq" id="WP_004684564.1">
    <property type="nucleotide sequence ID" value="NZ_KN046804.1"/>
</dbReference>
<dbReference type="SMR" id="Q8FXX1"/>
<dbReference type="GeneID" id="55591692"/>
<dbReference type="KEGG" id="bms:BR2126"/>
<dbReference type="KEGG" id="bsi:BS1330_I2120"/>
<dbReference type="PATRIC" id="fig|204722.21.peg.686"/>
<dbReference type="HOGENOM" id="CLU_017633_0_7_5"/>
<dbReference type="PhylomeDB" id="Q8FXX1"/>
<dbReference type="PRO" id="PR:Q8FXX1"/>
<dbReference type="Proteomes" id="UP000007104">
    <property type="component" value="Chromosome I"/>
</dbReference>
<dbReference type="GO" id="GO:0005737">
    <property type="term" value="C:cytoplasm"/>
    <property type="evidence" value="ECO:0007669"/>
    <property type="project" value="UniProtKB-SubCell"/>
</dbReference>
<dbReference type="GO" id="GO:0005524">
    <property type="term" value="F:ATP binding"/>
    <property type="evidence" value="ECO:0007669"/>
    <property type="project" value="InterPro"/>
</dbReference>
<dbReference type="GO" id="GO:0031072">
    <property type="term" value="F:heat shock protein binding"/>
    <property type="evidence" value="ECO:0007669"/>
    <property type="project" value="InterPro"/>
</dbReference>
<dbReference type="GO" id="GO:0051082">
    <property type="term" value="F:unfolded protein binding"/>
    <property type="evidence" value="ECO:0007669"/>
    <property type="project" value="UniProtKB-UniRule"/>
</dbReference>
<dbReference type="GO" id="GO:0008270">
    <property type="term" value="F:zinc ion binding"/>
    <property type="evidence" value="ECO:0007669"/>
    <property type="project" value="UniProtKB-UniRule"/>
</dbReference>
<dbReference type="GO" id="GO:0051085">
    <property type="term" value="P:chaperone cofactor-dependent protein refolding"/>
    <property type="evidence" value="ECO:0007669"/>
    <property type="project" value="TreeGrafter"/>
</dbReference>
<dbReference type="GO" id="GO:0006260">
    <property type="term" value="P:DNA replication"/>
    <property type="evidence" value="ECO:0007669"/>
    <property type="project" value="UniProtKB-KW"/>
</dbReference>
<dbReference type="GO" id="GO:0042026">
    <property type="term" value="P:protein refolding"/>
    <property type="evidence" value="ECO:0007669"/>
    <property type="project" value="TreeGrafter"/>
</dbReference>
<dbReference type="GO" id="GO:0009408">
    <property type="term" value="P:response to heat"/>
    <property type="evidence" value="ECO:0007669"/>
    <property type="project" value="InterPro"/>
</dbReference>
<dbReference type="CDD" id="cd06257">
    <property type="entry name" value="DnaJ"/>
    <property type="match status" value="1"/>
</dbReference>
<dbReference type="CDD" id="cd10747">
    <property type="entry name" value="DnaJ_C"/>
    <property type="match status" value="1"/>
</dbReference>
<dbReference type="CDD" id="cd10719">
    <property type="entry name" value="DnaJ_zf"/>
    <property type="match status" value="1"/>
</dbReference>
<dbReference type="FunFam" id="1.10.287.110:FF:000034">
    <property type="entry name" value="Chaperone protein DnaJ"/>
    <property type="match status" value="1"/>
</dbReference>
<dbReference type="FunFam" id="2.10.230.10:FF:000002">
    <property type="entry name" value="Molecular chaperone DnaJ"/>
    <property type="match status" value="1"/>
</dbReference>
<dbReference type="FunFam" id="2.60.260.20:FF:000004">
    <property type="entry name" value="Molecular chaperone DnaJ"/>
    <property type="match status" value="1"/>
</dbReference>
<dbReference type="Gene3D" id="1.10.287.110">
    <property type="entry name" value="DnaJ domain"/>
    <property type="match status" value="1"/>
</dbReference>
<dbReference type="Gene3D" id="2.10.230.10">
    <property type="entry name" value="Heat shock protein DnaJ, cysteine-rich domain"/>
    <property type="match status" value="1"/>
</dbReference>
<dbReference type="Gene3D" id="2.60.260.20">
    <property type="entry name" value="Urease metallochaperone UreE, N-terminal domain"/>
    <property type="match status" value="2"/>
</dbReference>
<dbReference type="HAMAP" id="MF_01152">
    <property type="entry name" value="DnaJ"/>
    <property type="match status" value="1"/>
</dbReference>
<dbReference type="InterPro" id="IPR012724">
    <property type="entry name" value="DnaJ"/>
</dbReference>
<dbReference type="InterPro" id="IPR002939">
    <property type="entry name" value="DnaJ_C"/>
</dbReference>
<dbReference type="InterPro" id="IPR001623">
    <property type="entry name" value="DnaJ_domain"/>
</dbReference>
<dbReference type="InterPro" id="IPR018253">
    <property type="entry name" value="DnaJ_domain_CS"/>
</dbReference>
<dbReference type="InterPro" id="IPR008971">
    <property type="entry name" value="HSP40/DnaJ_pept-bd"/>
</dbReference>
<dbReference type="InterPro" id="IPR001305">
    <property type="entry name" value="HSP_DnaJ_Cys-rich_dom"/>
</dbReference>
<dbReference type="InterPro" id="IPR036410">
    <property type="entry name" value="HSP_DnaJ_Cys-rich_dom_sf"/>
</dbReference>
<dbReference type="InterPro" id="IPR036869">
    <property type="entry name" value="J_dom_sf"/>
</dbReference>
<dbReference type="NCBIfam" id="TIGR02349">
    <property type="entry name" value="DnaJ_bact"/>
    <property type="match status" value="1"/>
</dbReference>
<dbReference type="NCBIfam" id="NF008035">
    <property type="entry name" value="PRK10767.1"/>
    <property type="match status" value="1"/>
</dbReference>
<dbReference type="PANTHER" id="PTHR43096:SF48">
    <property type="entry name" value="CHAPERONE PROTEIN DNAJ"/>
    <property type="match status" value="1"/>
</dbReference>
<dbReference type="PANTHER" id="PTHR43096">
    <property type="entry name" value="DNAJ HOMOLOG 1, MITOCHONDRIAL-RELATED"/>
    <property type="match status" value="1"/>
</dbReference>
<dbReference type="Pfam" id="PF00226">
    <property type="entry name" value="DnaJ"/>
    <property type="match status" value="1"/>
</dbReference>
<dbReference type="Pfam" id="PF01556">
    <property type="entry name" value="DnaJ_C"/>
    <property type="match status" value="1"/>
</dbReference>
<dbReference type="Pfam" id="PF00684">
    <property type="entry name" value="DnaJ_CXXCXGXG"/>
    <property type="match status" value="1"/>
</dbReference>
<dbReference type="PRINTS" id="PR00625">
    <property type="entry name" value="JDOMAIN"/>
</dbReference>
<dbReference type="SMART" id="SM00271">
    <property type="entry name" value="DnaJ"/>
    <property type="match status" value="1"/>
</dbReference>
<dbReference type="SUPFAM" id="SSF46565">
    <property type="entry name" value="Chaperone J-domain"/>
    <property type="match status" value="1"/>
</dbReference>
<dbReference type="SUPFAM" id="SSF57938">
    <property type="entry name" value="DnaJ/Hsp40 cysteine-rich domain"/>
    <property type="match status" value="1"/>
</dbReference>
<dbReference type="SUPFAM" id="SSF49493">
    <property type="entry name" value="HSP40/DnaJ peptide-binding domain"/>
    <property type="match status" value="2"/>
</dbReference>
<dbReference type="PROSITE" id="PS00636">
    <property type="entry name" value="DNAJ_1"/>
    <property type="match status" value="1"/>
</dbReference>
<dbReference type="PROSITE" id="PS50076">
    <property type="entry name" value="DNAJ_2"/>
    <property type="match status" value="1"/>
</dbReference>
<dbReference type="PROSITE" id="PS51188">
    <property type="entry name" value="ZF_CR"/>
    <property type="match status" value="1"/>
</dbReference>
<gene>
    <name evidence="1" type="primary">dnaJ</name>
    <name type="ordered locus">BR2126</name>
    <name type="ordered locus">BS1330_I2120</name>
</gene>
<comment type="function">
    <text evidence="1">Participates actively in the response to hyperosmotic and heat shock by preventing the aggregation of stress-denatured proteins and by disaggregating proteins, also in an autonomous, DnaK-independent fashion. Unfolded proteins bind initially to DnaJ; upon interaction with the DnaJ-bound protein, DnaK hydrolyzes its bound ATP, resulting in the formation of a stable complex. GrpE releases ADP from DnaK; ATP binding to DnaK triggers the release of the substrate protein, thus completing the reaction cycle. Several rounds of ATP-dependent interactions between DnaJ, DnaK and GrpE are required for fully efficient folding. Also involved, together with DnaK and GrpE, in the DNA replication of plasmids through activation of initiation proteins.</text>
</comment>
<comment type="cofactor">
    <cofactor evidence="1">
        <name>Zn(2+)</name>
        <dbReference type="ChEBI" id="CHEBI:29105"/>
    </cofactor>
    <text evidence="1">Binds 2 Zn(2+) ions per monomer.</text>
</comment>
<comment type="subunit">
    <text evidence="1">Homodimer.</text>
</comment>
<comment type="subcellular location">
    <subcellularLocation>
        <location evidence="1">Cytoplasm</location>
    </subcellularLocation>
</comment>
<comment type="domain">
    <text evidence="1">The J domain is necessary and sufficient to stimulate DnaK ATPase activity. Zinc center 1 plays an important role in the autonomous, DnaK-independent chaperone activity of DnaJ. Zinc center 2 is essential for interaction with DnaK and for DnaJ activity.</text>
</comment>
<comment type="similarity">
    <text evidence="1">Belongs to the DnaJ family.</text>
</comment>
<name>DNAJ_BRUSU</name>
<accession>Q8FXX1</accession>
<accession>G0K974</accession>
<keyword id="KW-0143">Chaperone</keyword>
<keyword id="KW-0963">Cytoplasm</keyword>
<keyword id="KW-0235">DNA replication</keyword>
<keyword id="KW-0479">Metal-binding</keyword>
<keyword id="KW-0677">Repeat</keyword>
<keyword id="KW-0346">Stress response</keyword>
<keyword id="KW-0862">Zinc</keyword>
<keyword id="KW-0863">Zinc-finger</keyword>
<sequence length="377" mass="41078">MKIDYYEALGVTRTADDKTLKAAFRKLAMQYHPDRNPDDPEAERKFKEIGEAYETLKDPQKRAAYDRFGHAAFENGGMGGGFGNGFGGAGGFADIFEDIFGEMMGGGRRRSNGGRERGADLRYNMEVTLEEAYAGKTAQIRVPTSITCDECSGSGAKPGSQPTTCTMCSGSGRVRAAQGFFSVERTCPGCNGRGQIIKDPCEKCHGQGRVTQERSLSVNIPAGIEDGTRIRLAGEGEAGLRGGPAGDLYIFLSVKPHEFFQRDGADLYCKVPISMTTAALGGQFEVSTLDGTQTRVKVPEGTQNGKQFRLKGKGMPVLRQSVTGDLYIQIDIETPQNLSKRQRELLEEFEKLSSQENSPKSAGFFSRMKEFFEGIGE</sequence>